<feature type="chain" id="PRO_0000357338" description="Methylthioribose kinase">
    <location>
        <begin position="1"/>
        <end position="399"/>
    </location>
</feature>
<feature type="binding site" evidence="1">
    <location>
        <position position="40"/>
    </location>
    <ligand>
        <name>ATP</name>
        <dbReference type="ChEBI" id="CHEBI:30616"/>
    </ligand>
</feature>
<feature type="binding site" evidence="1">
    <location>
        <position position="57"/>
    </location>
    <ligand>
        <name>ATP</name>
        <dbReference type="ChEBI" id="CHEBI:30616"/>
    </ligand>
</feature>
<feature type="binding site" evidence="1">
    <location>
        <begin position="111"/>
        <end position="113"/>
    </location>
    <ligand>
        <name>ATP</name>
        <dbReference type="ChEBI" id="CHEBI:30616"/>
    </ligand>
</feature>
<feature type="binding site" evidence="1">
    <location>
        <position position="229"/>
    </location>
    <ligand>
        <name>substrate</name>
    </ligand>
</feature>
<feature type="binding site" evidence="1">
    <location>
        <begin position="246"/>
        <end position="248"/>
    </location>
    <ligand>
        <name>ATP</name>
        <dbReference type="ChEBI" id="CHEBI:30616"/>
    </ligand>
</feature>
<feature type="binding site" evidence="1">
    <location>
        <position position="344"/>
    </location>
    <ligand>
        <name>substrate</name>
    </ligand>
</feature>
<sequence length="399" mass="44676">MSQYRTFTAQDAVEYARTFGGIDDPSTLVEAQEVGDGNLNLVFKIFDTTGVSRIVVKQALPYVRCVGESWPLTLDRARLEAQTLVAHYQHCPQHTVKIHHFDPELAVMVMEDLSDHNIWRGELIKGAWYPQAARQLGEYLAQTLFHTSDFYLHPHDKKAQVATFINPEMCEITEDLFFNDPYQIHERNSYPAEIEGDVAALRSDAQLKLAVAALKHRFFSHAEALLHGDIHSGSIFVADGRLKAIDAEFGYFGPIGFDVGTAIGNLLLNFCGLPGHLGIRDAAAAREQRLTDIQELWNTFAERFQVLATEKTRDAALRAPGYASEFLKKVWADAIGFCGTELIRRSVGLSHVADIDTIQDAEMRHECLRHAITLGKALIVIADRIESVEALIARVRQYS</sequence>
<organism>
    <name type="scientific">Citrobacter koseri (strain ATCC BAA-895 / CDC 4225-83 / SGSC4696)</name>
    <dbReference type="NCBI Taxonomy" id="290338"/>
    <lineage>
        <taxon>Bacteria</taxon>
        <taxon>Pseudomonadati</taxon>
        <taxon>Pseudomonadota</taxon>
        <taxon>Gammaproteobacteria</taxon>
        <taxon>Enterobacterales</taxon>
        <taxon>Enterobacteriaceae</taxon>
        <taxon>Citrobacter</taxon>
    </lineage>
</organism>
<name>MTNK_CITK8</name>
<keyword id="KW-0028">Amino-acid biosynthesis</keyword>
<keyword id="KW-0067">ATP-binding</keyword>
<keyword id="KW-0418">Kinase</keyword>
<keyword id="KW-0486">Methionine biosynthesis</keyword>
<keyword id="KW-0547">Nucleotide-binding</keyword>
<keyword id="KW-1185">Reference proteome</keyword>
<keyword id="KW-0808">Transferase</keyword>
<protein>
    <recommendedName>
        <fullName evidence="1">Methylthioribose kinase</fullName>
        <shortName evidence="1">MTR kinase</shortName>
        <ecNumber evidence="1">2.7.1.100</ecNumber>
    </recommendedName>
</protein>
<dbReference type="EC" id="2.7.1.100" evidence="1"/>
<dbReference type="EMBL" id="CP000822">
    <property type="protein sequence ID" value="ABV15047.1"/>
    <property type="status" value="ALT_INIT"/>
    <property type="molecule type" value="Genomic_DNA"/>
</dbReference>
<dbReference type="RefSeq" id="WP_024130868.1">
    <property type="nucleotide sequence ID" value="NC_009792.1"/>
</dbReference>
<dbReference type="SMR" id="A8ANI4"/>
<dbReference type="STRING" id="290338.CKO_03975"/>
<dbReference type="GeneID" id="45137627"/>
<dbReference type="KEGG" id="cko:CKO_03975"/>
<dbReference type="HOGENOM" id="CLU_033681_0_0_6"/>
<dbReference type="OrthoDB" id="9777791at2"/>
<dbReference type="UniPathway" id="UPA00904">
    <property type="reaction ID" value="UER00872"/>
</dbReference>
<dbReference type="Proteomes" id="UP000008148">
    <property type="component" value="Chromosome"/>
</dbReference>
<dbReference type="GO" id="GO:0005524">
    <property type="term" value="F:ATP binding"/>
    <property type="evidence" value="ECO:0007669"/>
    <property type="project" value="UniProtKB-UniRule"/>
</dbReference>
<dbReference type="GO" id="GO:0046522">
    <property type="term" value="F:S-methyl-5-thioribose kinase activity"/>
    <property type="evidence" value="ECO:0007669"/>
    <property type="project" value="UniProtKB-UniRule"/>
</dbReference>
<dbReference type="GO" id="GO:0019509">
    <property type="term" value="P:L-methionine salvage from methylthioadenosine"/>
    <property type="evidence" value="ECO:0007669"/>
    <property type="project" value="UniProtKB-UniRule"/>
</dbReference>
<dbReference type="Gene3D" id="3.90.1200.10">
    <property type="match status" value="1"/>
</dbReference>
<dbReference type="Gene3D" id="3.30.200.20">
    <property type="entry name" value="Phosphorylase Kinase, domain 1"/>
    <property type="match status" value="1"/>
</dbReference>
<dbReference type="HAMAP" id="MF_01683">
    <property type="entry name" value="Salvage_MtnK"/>
    <property type="match status" value="1"/>
</dbReference>
<dbReference type="InterPro" id="IPR002575">
    <property type="entry name" value="Aminoglycoside_PTrfase"/>
</dbReference>
<dbReference type="InterPro" id="IPR011009">
    <property type="entry name" value="Kinase-like_dom_sf"/>
</dbReference>
<dbReference type="InterPro" id="IPR009212">
    <property type="entry name" value="Methylthioribose_kinase"/>
</dbReference>
<dbReference type="NCBIfam" id="TIGR01767">
    <property type="entry name" value="MTRK"/>
    <property type="match status" value="1"/>
</dbReference>
<dbReference type="PANTHER" id="PTHR34273">
    <property type="entry name" value="METHYLTHIORIBOSE KINASE"/>
    <property type="match status" value="1"/>
</dbReference>
<dbReference type="PANTHER" id="PTHR34273:SF2">
    <property type="entry name" value="METHYLTHIORIBOSE KINASE"/>
    <property type="match status" value="1"/>
</dbReference>
<dbReference type="Pfam" id="PF01636">
    <property type="entry name" value="APH"/>
    <property type="match status" value="1"/>
</dbReference>
<dbReference type="PIRSF" id="PIRSF031134">
    <property type="entry name" value="MTRK"/>
    <property type="match status" value="1"/>
</dbReference>
<dbReference type="SUPFAM" id="SSF56112">
    <property type="entry name" value="Protein kinase-like (PK-like)"/>
    <property type="match status" value="1"/>
</dbReference>
<reference key="1">
    <citation type="submission" date="2007-08" db="EMBL/GenBank/DDBJ databases">
        <authorList>
            <consortium name="The Citrobacter koseri Genome Sequencing Project"/>
            <person name="McClelland M."/>
            <person name="Sanderson E.K."/>
            <person name="Porwollik S."/>
            <person name="Spieth J."/>
            <person name="Clifton W.S."/>
            <person name="Latreille P."/>
            <person name="Courtney L."/>
            <person name="Wang C."/>
            <person name="Pepin K."/>
            <person name="Bhonagiri V."/>
            <person name="Nash W."/>
            <person name="Johnson M."/>
            <person name="Thiruvilangam P."/>
            <person name="Wilson R."/>
        </authorList>
    </citation>
    <scope>NUCLEOTIDE SEQUENCE [LARGE SCALE GENOMIC DNA]</scope>
    <source>
        <strain>ATCC BAA-895 / CDC 4225-83 / SGSC4696</strain>
    </source>
</reference>
<proteinExistence type="inferred from homology"/>
<evidence type="ECO:0000255" key="1">
    <source>
        <dbReference type="HAMAP-Rule" id="MF_01683"/>
    </source>
</evidence>
<evidence type="ECO:0000305" key="2"/>
<gene>
    <name evidence="1" type="primary">mtnK</name>
    <name type="ordered locus">CKO_03975</name>
</gene>
<accession>A8ANI4</accession>
<comment type="function">
    <text evidence="1">Catalyzes the phosphorylation of methylthioribose into methylthioribose-1-phosphate.</text>
</comment>
<comment type="catalytic activity">
    <reaction evidence="1">
        <text>5-(methylsulfanyl)-D-ribose + ATP = 5-(methylsulfanyl)-alpha-D-ribose 1-phosphate + ADP + H(+)</text>
        <dbReference type="Rhea" id="RHEA:22312"/>
        <dbReference type="ChEBI" id="CHEBI:15378"/>
        <dbReference type="ChEBI" id="CHEBI:30616"/>
        <dbReference type="ChEBI" id="CHEBI:58533"/>
        <dbReference type="ChEBI" id="CHEBI:78440"/>
        <dbReference type="ChEBI" id="CHEBI:456216"/>
        <dbReference type="EC" id="2.7.1.100"/>
    </reaction>
</comment>
<comment type="pathway">
    <text evidence="1">Amino-acid biosynthesis; L-methionine biosynthesis via salvage pathway; S-methyl-5-thio-alpha-D-ribose 1-phosphate from S-methyl-5'-thioadenosine (hydrolase route): step 2/2.</text>
</comment>
<comment type="subunit">
    <text evidence="1">Homodimer.</text>
</comment>
<comment type="similarity">
    <text evidence="1">Belongs to the methylthioribose kinase family.</text>
</comment>
<comment type="sequence caution" evidence="2">
    <conflict type="erroneous initiation">
        <sequence resource="EMBL-CDS" id="ABV15047"/>
    </conflict>
</comment>